<sequence>MPSCTASTMPGMICKNPDLEFDSLQPCFYPDEDDFYFGGPDSTPPGEDIWKKFELLPTPPLSPSRAFPEHSPEPSNWATEMLLPEADLWGNPAEEDAFGLGGLGGLTPNPVILQDCMWSGFSAREKLERAVNEKLQHGHGPPGASSSCPAPGVGASSSGGRALGGSASAGRTGATLPTDLSHPAAECVDPAVVFPFPVNKRESASVPAAPTSAPATSAVVTSVSVPAVAPVAAPARGSGRPANSGEHKALSTSGEDTLSDSDDEDDEEEDEEEEIDVVTVEKRRSSSNNKAVTTFTITVRPKTSALGLGRAQPGELILKRCVPIHQQHNYAAPSPYVESEDAPPQKKIKSEASPRPLKSVVPPKAKSLSPRNSDSEDSERRRNHNILERQRRNDLRSSFLTLRDHVPELVKNEKAAKVVILKKATEYVHALQANEHQLLLEKEKLQARQQQLLKKIEHARTC</sequence>
<organism>
    <name type="scientific">Rattus norvegicus</name>
    <name type="common">Rat</name>
    <dbReference type="NCBI Taxonomy" id="10116"/>
    <lineage>
        <taxon>Eukaryota</taxon>
        <taxon>Metazoa</taxon>
        <taxon>Chordata</taxon>
        <taxon>Craniata</taxon>
        <taxon>Vertebrata</taxon>
        <taxon>Euteleostomi</taxon>
        <taxon>Mammalia</taxon>
        <taxon>Eutheria</taxon>
        <taxon>Euarchontoglires</taxon>
        <taxon>Glires</taxon>
        <taxon>Rodentia</taxon>
        <taxon>Myomorpha</taxon>
        <taxon>Muroidea</taxon>
        <taxon>Muridae</taxon>
        <taxon>Murinae</taxon>
        <taxon>Rattus</taxon>
    </lineage>
</organism>
<protein>
    <recommendedName>
        <fullName>N-myc proto-oncogene protein</fullName>
    </recommendedName>
</protein>
<evidence type="ECO:0000250" key="1">
    <source>
        <dbReference type="UniProtKB" id="P04198"/>
    </source>
</evidence>
<evidence type="ECO:0000255" key="2">
    <source>
        <dbReference type="PROSITE-ProRule" id="PRU00981"/>
    </source>
</evidence>
<evidence type="ECO:0000256" key="3">
    <source>
        <dbReference type="SAM" id="MobiDB-lite"/>
    </source>
</evidence>
<dbReference type="EMBL" id="X63281">
    <property type="protein sequence ID" value="CAA44920.1"/>
    <property type="molecule type" value="Genomic_DNA"/>
</dbReference>
<dbReference type="PIR" id="S20073">
    <property type="entry name" value="S20073"/>
</dbReference>
<dbReference type="RefSeq" id="NP_001013114.1">
    <property type="nucleotide sequence ID" value="NM_001013096.1"/>
</dbReference>
<dbReference type="SMR" id="Q63379"/>
<dbReference type="FunCoup" id="Q63379">
    <property type="interactions" value="684"/>
</dbReference>
<dbReference type="STRING" id="10116.ENSRNOP00000068733"/>
<dbReference type="GlyGen" id="Q63379">
    <property type="glycosylation" value="2 sites"/>
</dbReference>
<dbReference type="iPTMnet" id="Q63379"/>
<dbReference type="PhosphoSitePlus" id="Q63379"/>
<dbReference type="PaxDb" id="10116-ENSRNOP00000008643"/>
<dbReference type="GeneID" id="298894"/>
<dbReference type="KEGG" id="rno:298894"/>
<dbReference type="AGR" id="RGD:1584995"/>
<dbReference type="CTD" id="4613"/>
<dbReference type="RGD" id="1584995">
    <property type="gene designation" value="Mycn"/>
</dbReference>
<dbReference type="eggNOG" id="KOG2588">
    <property type="taxonomic scope" value="Eukaryota"/>
</dbReference>
<dbReference type="InParanoid" id="Q63379"/>
<dbReference type="PhylomeDB" id="Q63379"/>
<dbReference type="PRO" id="PR:Q63379"/>
<dbReference type="Proteomes" id="UP000002494">
    <property type="component" value="Unplaced"/>
</dbReference>
<dbReference type="GO" id="GO:0005634">
    <property type="term" value="C:nucleus"/>
    <property type="evidence" value="ECO:0000266"/>
    <property type="project" value="RGD"/>
</dbReference>
<dbReference type="GO" id="GO:0001228">
    <property type="term" value="F:DNA-binding transcription activator activity, RNA polymerase II-specific"/>
    <property type="evidence" value="ECO:0000266"/>
    <property type="project" value="RGD"/>
</dbReference>
<dbReference type="GO" id="GO:0000981">
    <property type="term" value="F:DNA-binding transcription factor activity, RNA polymerase II-specific"/>
    <property type="evidence" value="ECO:0000318"/>
    <property type="project" value="GO_Central"/>
</dbReference>
<dbReference type="GO" id="GO:0019900">
    <property type="term" value="F:kinase binding"/>
    <property type="evidence" value="ECO:0000266"/>
    <property type="project" value="RGD"/>
</dbReference>
<dbReference type="GO" id="GO:0046983">
    <property type="term" value="F:protein dimerization activity"/>
    <property type="evidence" value="ECO:0007669"/>
    <property type="project" value="InterPro"/>
</dbReference>
<dbReference type="GO" id="GO:0000978">
    <property type="term" value="F:RNA polymerase II cis-regulatory region sequence-specific DNA binding"/>
    <property type="evidence" value="ECO:0000266"/>
    <property type="project" value="RGD"/>
</dbReference>
<dbReference type="GO" id="GO:1990837">
    <property type="term" value="F:sequence-specific double-stranded DNA binding"/>
    <property type="evidence" value="ECO:0000266"/>
    <property type="project" value="RGD"/>
</dbReference>
<dbReference type="GO" id="GO:0048708">
    <property type="term" value="P:astrocyte differentiation"/>
    <property type="evidence" value="ECO:0000266"/>
    <property type="project" value="RGD"/>
</dbReference>
<dbReference type="GO" id="GO:0141068">
    <property type="term" value="P:autosome genomic imprinting"/>
    <property type="evidence" value="ECO:0000266"/>
    <property type="project" value="RGD"/>
</dbReference>
<dbReference type="GO" id="GO:0048754">
    <property type="term" value="P:branching morphogenesis of an epithelial tube"/>
    <property type="evidence" value="ECO:0000266"/>
    <property type="project" value="RGD"/>
</dbReference>
<dbReference type="GO" id="GO:0001502">
    <property type="term" value="P:cartilage condensation"/>
    <property type="evidence" value="ECO:0000266"/>
    <property type="project" value="RGD"/>
</dbReference>
<dbReference type="GO" id="GO:0008283">
    <property type="term" value="P:cell population proliferation"/>
    <property type="evidence" value="ECO:0000266"/>
    <property type="project" value="RGD"/>
</dbReference>
<dbReference type="GO" id="GO:0042733">
    <property type="term" value="P:embryonic digit morphogenesis"/>
    <property type="evidence" value="ECO:0000266"/>
    <property type="project" value="RGD"/>
</dbReference>
<dbReference type="GO" id="GO:0048704">
    <property type="term" value="P:embryonic skeletal system morphogenesis"/>
    <property type="evidence" value="ECO:0000266"/>
    <property type="project" value="RGD"/>
</dbReference>
<dbReference type="GO" id="GO:0050673">
    <property type="term" value="P:epithelial cell proliferation"/>
    <property type="evidence" value="ECO:0000266"/>
    <property type="project" value="RGD"/>
</dbReference>
<dbReference type="GO" id="GO:0030324">
    <property type="term" value="P:lung development"/>
    <property type="evidence" value="ECO:0000266"/>
    <property type="project" value="RGD"/>
</dbReference>
<dbReference type="GO" id="GO:0048712">
    <property type="term" value="P:negative regulation of astrocyte differentiation"/>
    <property type="evidence" value="ECO:0000266"/>
    <property type="project" value="RGD"/>
</dbReference>
<dbReference type="GO" id="GO:0010629">
    <property type="term" value="P:negative regulation of gene expression"/>
    <property type="evidence" value="ECO:0000266"/>
    <property type="project" value="RGD"/>
</dbReference>
<dbReference type="GO" id="GO:2000378">
    <property type="term" value="P:negative regulation of reactive oxygen species metabolic process"/>
    <property type="evidence" value="ECO:0000266"/>
    <property type="project" value="RGD"/>
</dbReference>
<dbReference type="GO" id="GO:0045893">
    <property type="term" value="P:positive regulation of DNA-templated transcription"/>
    <property type="evidence" value="ECO:0000266"/>
    <property type="project" value="RGD"/>
</dbReference>
<dbReference type="GO" id="GO:0050679">
    <property type="term" value="P:positive regulation of epithelial cell proliferation"/>
    <property type="evidence" value="ECO:0000266"/>
    <property type="project" value="RGD"/>
</dbReference>
<dbReference type="GO" id="GO:0010628">
    <property type="term" value="P:positive regulation of gene expression"/>
    <property type="evidence" value="ECO:0000266"/>
    <property type="project" value="RGD"/>
</dbReference>
<dbReference type="GO" id="GO:0002053">
    <property type="term" value="P:positive regulation of mesenchymal cell proliferation"/>
    <property type="evidence" value="ECO:0000266"/>
    <property type="project" value="RGD"/>
</dbReference>
<dbReference type="GO" id="GO:0043068">
    <property type="term" value="P:positive regulation of programmed cell death"/>
    <property type="evidence" value="ECO:0000266"/>
    <property type="project" value="RGD"/>
</dbReference>
<dbReference type="GO" id="GO:0045944">
    <property type="term" value="P:positive regulation of transcription by RNA polymerase II"/>
    <property type="evidence" value="ECO:0000266"/>
    <property type="project" value="RGD"/>
</dbReference>
<dbReference type="GO" id="GO:0045607">
    <property type="term" value="P:regulation of inner ear auditory receptor cell differentiation"/>
    <property type="evidence" value="ECO:0000266"/>
    <property type="project" value="RGD"/>
</dbReference>
<dbReference type="GO" id="GO:0006357">
    <property type="term" value="P:regulation of transcription by RNA polymerase II"/>
    <property type="evidence" value="ECO:0000318"/>
    <property type="project" value="GO_Central"/>
</dbReference>
<dbReference type="CDD" id="cd11456">
    <property type="entry name" value="bHLHzip_N-Myc_like"/>
    <property type="match status" value="1"/>
</dbReference>
<dbReference type="FunFam" id="4.10.280.10:FF:000019">
    <property type="entry name" value="Myc proto-oncogene protein"/>
    <property type="match status" value="1"/>
</dbReference>
<dbReference type="Gene3D" id="4.10.280.10">
    <property type="entry name" value="Helix-loop-helix DNA-binding domain"/>
    <property type="match status" value="1"/>
</dbReference>
<dbReference type="InterPro" id="IPR011598">
    <property type="entry name" value="bHLH_dom"/>
</dbReference>
<dbReference type="InterPro" id="IPR036638">
    <property type="entry name" value="HLH_DNA-bd_sf"/>
</dbReference>
<dbReference type="InterPro" id="IPR050433">
    <property type="entry name" value="Myc_transcription_factors"/>
</dbReference>
<dbReference type="InterPro" id="IPR002418">
    <property type="entry name" value="Tscrpt_reg_Myc"/>
</dbReference>
<dbReference type="InterPro" id="IPR012682">
    <property type="entry name" value="Tscrpt_reg_Myc_N"/>
</dbReference>
<dbReference type="PANTHER" id="PTHR45851">
    <property type="entry name" value="MYC PROTO-ONCOGENE"/>
    <property type="match status" value="1"/>
</dbReference>
<dbReference type="Pfam" id="PF00010">
    <property type="entry name" value="HLH"/>
    <property type="match status" value="1"/>
</dbReference>
<dbReference type="Pfam" id="PF01056">
    <property type="entry name" value="Myc_N"/>
    <property type="match status" value="1"/>
</dbReference>
<dbReference type="PIRSF" id="PIRSF001705">
    <property type="entry name" value="Myc_protein"/>
    <property type="match status" value="1"/>
</dbReference>
<dbReference type="PRINTS" id="PR00044">
    <property type="entry name" value="LEUZIPPRMYC"/>
</dbReference>
<dbReference type="SMART" id="SM00353">
    <property type="entry name" value="HLH"/>
    <property type="match status" value="1"/>
</dbReference>
<dbReference type="SUPFAM" id="SSF47459">
    <property type="entry name" value="HLH, helix-loop-helix DNA-binding domain"/>
    <property type="match status" value="1"/>
</dbReference>
<dbReference type="PROSITE" id="PS50888">
    <property type="entry name" value="BHLH"/>
    <property type="match status" value="1"/>
</dbReference>
<feature type="chain" id="PRO_0000127326" description="N-myc proto-oncogene protein">
    <location>
        <begin position="1"/>
        <end position="462"/>
    </location>
</feature>
<feature type="domain" description="bHLH" evidence="2">
    <location>
        <begin position="379"/>
        <end position="431"/>
    </location>
</feature>
<feature type="region of interest" description="Interaction with AURKA" evidence="1">
    <location>
        <begin position="19"/>
        <end position="47"/>
    </location>
</feature>
<feature type="region of interest" description="Interaction with AURKA and FBXW7" evidence="1">
    <location>
        <begin position="61"/>
        <end position="90"/>
    </location>
</feature>
<feature type="region of interest" description="Disordered" evidence="3">
    <location>
        <begin position="133"/>
        <end position="177"/>
    </location>
</feature>
<feature type="region of interest" description="Disordered" evidence="3">
    <location>
        <begin position="232"/>
        <end position="290"/>
    </location>
</feature>
<feature type="region of interest" description="Disordered" evidence="3">
    <location>
        <begin position="332"/>
        <end position="390"/>
    </location>
</feature>
<feature type="region of interest" description="Leucine-zipper">
    <location>
        <begin position="431"/>
        <end position="452"/>
    </location>
</feature>
<feature type="short sequence motif" description="9aaTAD" evidence="1">
    <location>
        <begin position="76"/>
        <end position="85"/>
    </location>
</feature>
<feature type="compositionally biased region" description="Low complexity" evidence="3">
    <location>
        <begin position="138"/>
        <end position="174"/>
    </location>
</feature>
<feature type="compositionally biased region" description="Acidic residues" evidence="3">
    <location>
        <begin position="257"/>
        <end position="276"/>
    </location>
</feature>
<feature type="modified residue" description="Phosphoserine; by CK2" evidence="1">
    <location>
        <position position="259"/>
    </location>
</feature>
<feature type="modified residue" description="Phosphoserine; by CK2" evidence="1">
    <location>
        <position position="261"/>
    </location>
</feature>
<name>MYCN_RAT</name>
<proteinExistence type="inferred from homology"/>
<accession>Q63379</accession>
<keyword id="KW-0238">DNA-binding</keyword>
<keyword id="KW-0539">Nucleus</keyword>
<keyword id="KW-0597">Phosphoprotein</keyword>
<keyword id="KW-0656">Proto-oncogene</keyword>
<keyword id="KW-1185">Reference proteome</keyword>
<reference key="1">
    <citation type="journal article" date="1991" name="Oncogene">
        <title>Different usage of two polyadenylylation signals in transcription of the N-myc gene in rat tumor cells.</title>
        <authorList>
            <person name="Sugiyama A."/>
            <person name="Miyagi Y."/>
            <person name="Shirasawa Y."/>
            <person name="Kuchino Y."/>
        </authorList>
    </citation>
    <scope>NUCLEOTIDE SEQUENCE [GENOMIC DNA]</scope>
</reference>
<gene>
    <name type="primary">Mycn</name>
    <name type="synonym">Nmyc</name>
    <name type="synonym">Nmyc1</name>
</gene>
<comment type="function">
    <text evidence="1">Positively regulates the transcription of MYCNOS in neuroblastoma cells.</text>
</comment>
<comment type="subunit">
    <text evidence="1">Efficient DNA binding requires dimerization with another bHLH protein. Binds DNA as a heterodimer with MAX. Interacts with KDM5A, KDM5B and HUWE1. Interacts with MYCNOS. Interacts with AURKA; interaction is phospho-independent and triggers AURKA activation; AURKA competes with FBXW7 for binding to unphosphorylated MYCN but not for binding to unphosphorylated MYCN. Interacts with FBXW7; FBXW7 competes with AURKA for binding to unphosphorylated MYCN but not for binding to phosphorylated MYCN.</text>
</comment>
<comment type="subcellular location">
    <subcellularLocation>
        <location>Nucleus</location>
    </subcellularLocation>
</comment>
<comment type="domain">
    <text evidence="1">The 9aaTAD motif is a transactivation domain present in a large number of yeast and animal transcription factors.</text>
</comment>
<comment type="PTM">
    <text evidence="1">Phosphorylated by GSK3-beta which may promote its degradation. Phosphorylated by AURKA.</text>
</comment>